<dbReference type="EC" id="1.-.-.-" evidence="13"/>
<dbReference type="EMBL" id="HG792016">
    <property type="protein sequence ID" value="CDM31319.1"/>
    <property type="molecule type" value="Genomic_DNA"/>
</dbReference>
<dbReference type="SMR" id="W6QB15"/>
<dbReference type="STRING" id="1365484.W6QB15"/>
<dbReference type="GlyCosmos" id="W6QB15">
    <property type="glycosylation" value="3 sites, No reported glycans"/>
</dbReference>
<dbReference type="OMA" id="QYTYGFM"/>
<dbReference type="OrthoDB" id="1470350at2759"/>
<dbReference type="Proteomes" id="UP000030686">
    <property type="component" value="Unassembled WGS sequence"/>
</dbReference>
<dbReference type="GO" id="GO:0016020">
    <property type="term" value="C:membrane"/>
    <property type="evidence" value="ECO:0007669"/>
    <property type="project" value="UniProtKB-SubCell"/>
</dbReference>
<dbReference type="GO" id="GO:0020037">
    <property type="term" value="F:heme binding"/>
    <property type="evidence" value="ECO:0007669"/>
    <property type="project" value="InterPro"/>
</dbReference>
<dbReference type="GO" id="GO:0005506">
    <property type="term" value="F:iron ion binding"/>
    <property type="evidence" value="ECO:0007669"/>
    <property type="project" value="InterPro"/>
</dbReference>
<dbReference type="GO" id="GO:0004497">
    <property type="term" value="F:monooxygenase activity"/>
    <property type="evidence" value="ECO:0007669"/>
    <property type="project" value="UniProtKB-KW"/>
</dbReference>
<dbReference type="GO" id="GO:0016705">
    <property type="term" value="F:oxidoreductase activity, acting on paired donors, with incorporation or reduction of molecular oxygen"/>
    <property type="evidence" value="ECO:0007669"/>
    <property type="project" value="InterPro"/>
</dbReference>
<dbReference type="GO" id="GO:0043386">
    <property type="term" value="P:mycotoxin biosynthetic process"/>
    <property type="evidence" value="ECO:0007669"/>
    <property type="project" value="UniProtKB-ARBA"/>
</dbReference>
<dbReference type="Gene3D" id="1.10.630.10">
    <property type="entry name" value="Cytochrome P450"/>
    <property type="match status" value="1"/>
</dbReference>
<dbReference type="InterPro" id="IPR001128">
    <property type="entry name" value="Cyt_P450"/>
</dbReference>
<dbReference type="InterPro" id="IPR017972">
    <property type="entry name" value="Cyt_P450_CS"/>
</dbReference>
<dbReference type="InterPro" id="IPR002401">
    <property type="entry name" value="Cyt_P450_E_grp-I"/>
</dbReference>
<dbReference type="InterPro" id="IPR036396">
    <property type="entry name" value="Cyt_P450_sf"/>
</dbReference>
<dbReference type="InterPro" id="IPR050121">
    <property type="entry name" value="Cytochrome_P450_monoxygenase"/>
</dbReference>
<dbReference type="PANTHER" id="PTHR24305">
    <property type="entry name" value="CYTOCHROME P450"/>
    <property type="match status" value="1"/>
</dbReference>
<dbReference type="PANTHER" id="PTHR24305:SF166">
    <property type="entry name" value="CYTOCHROME P450 12A4, MITOCHONDRIAL-RELATED"/>
    <property type="match status" value="1"/>
</dbReference>
<dbReference type="Pfam" id="PF00067">
    <property type="entry name" value="p450"/>
    <property type="match status" value="1"/>
</dbReference>
<dbReference type="PRINTS" id="PR00463">
    <property type="entry name" value="EP450I"/>
</dbReference>
<dbReference type="PRINTS" id="PR00385">
    <property type="entry name" value="P450"/>
</dbReference>
<dbReference type="SUPFAM" id="SSF48264">
    <property type="entry name" value="Cytochrome P450"/>
    <property type="match status" value="1"/>
</dbReference>
<dbReference type="PROSITE" id="PS00086">
    <property type="entry name" value="CYTOCHROME_P450"/>
    <property type="match status" value="1"/>
</dbReference>
<proteinExistence type="inferred from homology"/>
<protein>
    <recommendedName>
        <fullName evidence="10">Cytochrome P450 monooxygenase ORF6</fullName>
        <ecNumber evidence="13">1.-.-.-</ecNumber>
    </recommendedName>
    <alternativeName>
        <fullName evidence="10">PR-toxin biosynthesis cluster protein 6</fullName>
    </alternativeName>
</protein>
<organism>
    <name type="scientific">Penicillium roqueforti (strain FM164)</name>
    <dbReference type="NCBI Taxonomy" id="1365484"/>
    <lineage>
        <taxon>Eukaryota</taxon>
        <taxon>Fungi</taxon>
        <taxon>Dikarya</taxon>
        <taxon>Ascomycota</taxon>
        <taxon>Pezizomycotina</taxon>
        <taxon>Eurotiomycetes</taxon>
        <taxon>Eurotiomycetidae</taxon>
        <taxon>Eurotiales</taxon>
        <taxon>Aspergillaceae</taxon>
        <taxon>Penicillium</taxon>
    </lineage>
</organism>
<accession>W6QB15</accession>
<reference key="1">
    <citation type="journal article" date="2014" name="Nat. Commun.">
        <title>Multiple recent horizontal transfers of a large genomic region in cheese making fungi.</title>
        <authorList>
            <person name="Cheeseman K."/>
            <person name="Ropars J."/>
            <person name="Renault P."/>
            <person name="Dupont J."/>
            <person name="Gouzy J."/>
            <person name="Branca A."/>
            <person name="Abraham A.-L."/>
            <person name="Ceppi M."/>
            <person name="Conseiller E."/>
            <person name="Debuchy R."/>
            <person name="Malagnac F."/>
            <person name="Goarin A."/>
            <person name="Silar P."/>
            <person name="Lacoste S."/>
            <person name="Sallet E."/>
            <person name="Bensimon A."/>
            <person name="Giraud T."/>
            <person name="Brygoo Y."/>
        </authorList>
    </citation>
    <scope>NUCLEOTIDE SEQUENCE [LARGE SCALE GENOMIC DNA]</scope>
    <source>
        <strain>FM164</strain>
    </source>
</reference>
<reference key="2">
    <citation type="journal article" date="1980" name="Appl. Environ. Microbiol.">
        <title>Production of eremofortins A, B, and C relative to formation of PR toxin by Penicillium roqueforti.</title>
        <authorList>
            <person name="Moreau S."/>
            <person name="Lablache-Combier A."/>
            <person name="Biguet J."/>
        </authorList>
    </citation>
    <scope>FUNCTION</scope>
</reference>
<reference key="3">
    <citation type="journal article" date="1993" name="J. Biol. Chem.">
        <title>Aristolochene synthase. Isolation, characterization, and bacterial expression of a sesquiterpenoid biosynthetic gene (Ari1) from Penicillium roqueforti.</title>
        <authorList>
            <person name="Proctor R.H."/>
            <person name="Hohn T.M."/>
        </authorList>
    </citation>
    <scope>FUNCTION</scope>
</reference>
<reference key="4">
    <citation type="journal article" date="2004" name="J. Am. Chem. Soc.">
        <title>Aristolochene synthase: mechanistic analysis of active site residues by site-directed mutagenesis.</title>
        <authorList>
            <person name="Felicetti B."/>
            <person name="Cane D.E."/>
        </authorList>
    </citation>
    <scope>FUNCTION</scope>
</reference>
<reference key="5">
    <citation type="journal article" date="2014" name="Fungal Genet. Biol.">
        <title>Molecular characterization of the PR-toxin gene cluster in Penicillium roqueforti and Penicillium chrysogenum: cross talk of secondary metabolite pathways.</title>
        <authorList>
            <person name="Hidalgo P.I."/>
            <person name="Ullan R.V."/>
            <person name="Albillos S.M."/>
            <person name="Montero O."/>
            <person name="Fernandez-Bodega M.A."/>
            <person name="Garcia-Estrada C."/>
            <person name="Fernandez-Aguado M."/>
            <person name="Martin J.F."/>
        </authorList>
    </citation>
    <scope>FUNCTION</scope>
</reference>
<reference key="6">
    <citation type="journal article" date="2015" name="Angew. Chem. Int. Ed.">
        <title>Identification of intermediates in the biosynthesis of PR toxin by Penicillium roqueforti.</title>
        <authorList>
            <person name="Riclea R."/>
            <person name="Dickschat J.S."/>
        </authorList>
    </citation>
    <scope>FUNCTION</scope>
</reference>
<reference key="7">
    <citation type="journal article" date="2017" name="Appl. Microbiol. Biotechnol.">
        <title>Penicillium roqueforti PR toxin gene cluster characterization.</title>
        <authorList>
            <person name="Hidalgo P.I."/>
            <person name="Poirier E."/>
            <person name="Ullan R.V."/>
            <person name="Piqueras J."/>
            <person name="Meslet-Cladiere L."/>
            <person name="Coton E."/>
            <person name="Coton M."/>
        </authorList>
    </citation>
    <scope>FUNCTION</scope>
    <scope>DISRUPTION PHENOTYPE</scope>
    <scope>PATHWAY</scope>
</reference>
<gene>
    <name evidence="10" type="primary">ORF6</name>
    <name type="ORF">PROQFM164_S02g001469</name>
</gene>
<sequence>MNASKLPLGSFVGTTLLLFILYKLVKLAYYVGQAKKTGLPYTLVPVLETEFLGKLLTPLIRPLFTSRLSRGEGWPRWIRFSILDWAWEEKRRVHEELGDVFLLVSPEGLICYTADADMCWDVMNRRNEFLKPRDKYKVLEPYGPNVATTEGKAYNFHVRITAPPFNDGSGANDLVWNEASDQARALMESWSQENTTRDLSLDINRLTLAVISYTGFGKRLDFETEVSDLRNKIPPGYKMSLHHALHLVTTFMVKILLIPKWIMKMTSMKEIAIAHGELEKYMREMIRTETAKLSKDSEYQSADAKGNLLTSVLRASAFEAKAAGRKQAFSEDEVLGNLFLYLLAGYETTANAMTYGFITLALRQDLQDRIIQEVDGVYAEAAAEGRTSLNYTDDFEKFQYTYGFMYEVFRLYPGVCIITKMVPKDTTITVYPENNSPQQHVLPAECRVYLNVNAVHYHERYWPDPWALKPDRWMGTIGVTPNSRPNKKVVAQDKSRQVRGTLMTFSGGARACLGRKFTQSEYISVLATVLGKYRIVLGEGMDAKVVKQEIDHLAAGTVTLAPLKYVKLALKKRTDVKTG</sequence>
<evidence type="ECO:0000250" key="1">
    <source>
        <dbReference type="UniProtKB" id="P04798"/>
    </source>
</evidence>
<evidence type="ECO:0000255" key="2"/>
<evidence type="ECO:0000255" key="3">
    <source>
        <dbReference type="PROSITE-ProRule" id="PRU00498"/>
    </source>
</evidence>
<evidence type="ECO:0000269" key="4">
    <source>
    </source>
</evidence>
<evidence type="ECO:0000269" key="5">
    <source>
    </source>
</evidence>
<evidence type="ECO:0000269" key="6">
    <source>
    </source>
</evidence>
<evidence type="ECO:0000269" key="7">
    <source>
    </source>
</evidence>
<evidence type="ECO:0000269" key="8">
    <source>
    </source>
</evidence>
<evidence type="ECO:0000269" key="9">
    <source>
    </source>
</evidence>
<evidence type="ECO:0000303" key="10">
    <source>
    </source>
</evidence>
<evidence type="ECO:0000305" key="11"/>
<evidence type="ECO:0000305" key="12">
    <source>
    </source>
</evidence>
<evidence type="ECO:0000305" key="13">
    <source>
    </source>
</evidence>
<comment type="function">
    <text evidence="4 5 6 7 8 9">Cytochrome P450 monooxygenase; part of the gene cluster that mediates the biosynthesis of PR-toxin, a bicyclic sesquiterpene belonging to the eremophilane class and acting as a mycotoxin (PubMed:24239699, PubMed:27921136). The first step of the pathway is catalyzed by the aristolochene synthase which performs the cyclization of trans,trans-farnesyl diphosphate (FPP) to the bicyclic sesquiterpene aristolochene (PubMed:15186158, PubMed:24239699, PubMed:8440737). Following the formation of aristolochene, the non-oxygenated aristolochene is converted to the trioxygenated intermediate eremofortin B, via 7-epi-neopetasone (PubMed:24239699, PubMed:26274339). This conversion appears to involve three enzymes, a hydroxysterol oxidase-like enzyme, the quinone-oxidase prx3 that forms the quinone-type-structure in the bicyclic nucleus of aristolochene with the C8-oxo group and the C-3 hydroxyl group, and the P450 monooxygenase ORF6 that introduces the epoxide at the double bond between carbons 1 and 2 (PubMed:24239699, PubMed:27921136). No monoxy or dioxy-intermediates have been reported to be released to the broth, so these three early oxidative reactions may be coupled together (PubMed:24239699). Eremofortin B is further oxidized by another P450 monooxygenase, that introduces a second epoxide between carbons 7 and 11 prior to acetylation to eremofortin A by the acetyltransferase ORF8 (PubMed:16345540, PubMed:24239699, PubMed:27921136). The second epoxidation may be performed by a second P450 monooxygenase (PubMed:24239699). After the acetylation step, eremofortin A is converted to eremofortin C and then to PR-toxin (PubMed:24239699). First the conversion of eremofortin A to eremofortin C proceeds by oxidation of the side chain of the molecule at C-12 and is catalyzed by the short-chain oxidoreductase prx1 (PubMed:16345540, PubMed:24239699). The cytochrome P450 monooxygenase ORF6 is probably also involved in this step (PubMed:27921136). The primary alcohol formed at C-12 is finally oxidized by the short-chain alcohol dehydrogenase prx4 that forms PR-toxin (PubMed:16345540, PubMed:24239699).</text>
</comment>
<comment type="cofactor">
    <cofactor evidence="1">
        <name>heme</name>
        <dbReference type="ChEBI" id="CHEBI:30413"/>
    </cofactor>
</comment>
<comment type="pathway">
    <text evidence="8 12">Sesquiterpene biosynthesis.</text>
</comment>
<comment type="subcellular location">
    <subcellularLocation>
        <location evidence="2">Membrane</location>
        <topology evidence="2">Single-pass membrane protein</topology>
    </subcellularLocation>
</comment>
<comment type="disruption phenotype">
    <text evidence="8">Impairs the production of PR-toxin as well as of the intermediates eremofortin A and B.</text>
</comment>
<comment type="similarity">
    <text evidence="11">Belongs to the cytochrome P450 family.</text>
</comment>
<feature type="chain" id="PRO_0000451224" description="Cytochrome P450 monooxygenase ORF6">
    <location>
        <begin position="1"/>
        <end position="579"/>
    </location>
</feature>
<feature type="transmembrane region" description="Helical" evidence="2">
    <location>
        <begin position="7"/>
        <end position="29"/>
    </location>
</feature>
<feature type="binding site" description="axial binding residue" evidence="1">
    <location>
        <position position="512"/>
    </location>
    <ligand>
        <name>heme</name>
        <dbReference type="ChEBI" id="CHEBI:30413"/>
    </ligand>
    <ligandPart>
        <name>Fe</name>
        <dbReference type="ChEBI" id="CHEBI:18248"/>
    </ligandPart>
</feature>
<feature type="glycosylation site" description="N-linked (GlcNAc...) asparagine" evidence="3">
    <location>
        <position position="2"/>
    </location>
</feature>
<feature type="glycosylation site" description="N-linked (GlcNAc...) asparagine" evidence="3">
    <location>
        <position position="194"/>
    </location>
</feature>
<feature type="glycosylation site" description="N-linked (GlcNAc...) asparagine" evidence="3">
    <location>
        <position position="390"/>
    </location>
</feature>
<keyword id="KW-0325">Glycoprotein</keyword>
<keyword id="KW-0349">Heme</keyword>
<keyword id="KW-0408">Iron</keyword>
<keyword id="KW-0472">Membrane</keyword>
<keyword id="KW-0479">Metal-binding</keyword>
<keyword id="KW-0503">Monooxygenase</keyword>
<keyword id="KW-0560">Oxidoreductase</keyword>
<keyword id="KW-1185">Reference proteome</keyword>
<keyword id="KW-0812">Transmembrane</keyword>
<keyword id="KW-1133">Transmembrane helix</keyword>
<name>PRX9_PENRF</name>